<evidence type="ECO:0000255" key="1">
    <source>
        <dbReference type="HAMAP-Rule" id="MF_01635"/>
    </source>
</evidence>
<accession>A4IYU3</accession>
<keyword id="KW-0997">Cell inner membrane</keyword>
<keyword id="KW-1003">Cell membrane</keyword>
<keyword id="KW-0460">Magnesium</keyword>
<keyword id="KW-0472">Membrane</keyword>
<keyword id="KW-0808">Transferase</keyword>
<keyword id="KW-0812">Transmembrane</keyword>
<keyword id="KW-1133">Transmembrane helix</keyword>
<keyword id="KW-0831">Ubiquinone biosynthesis</keyword>
<organism>
    <name type="scientific">Francisella tularensis subsp. tularensis (strain WY96-3418)</name>
    <dbReference type="NCBI Taxonomy" id="418136"/>
    <lineage>
        <taxon>Bacteria</taxon>
        <taxon>Pseudomonadati</taxon>
        <taxon>Pseudomonadota</taxon>
        <taxon>Gammaproteobacteria</taxon>
        <taxon>Thiotrichales</taxon>
        <taxon>Francisellaceae</taxon>
        <taxon>Francisella</taxon>
    </lineage>
</organism>
<reference key="1">
    <citation type="journal article" date="2007" name="PLoS ONE">
        <title>Complete genomic characterization of a pathogenic A.II strain of Francisella tularensis subspecies tularensis.</title>
        <authorList>
            <person name="Beckstrom-Sternberg S.M."/>
            <person name="Auerbach R.K."/>
            <person name="Godbole S."/>
            <person name="Pearson J.V."/>
            <person name="Beckstrom-Sternberg J.S."/>
            <person name="Deng Z."/>
            <person name="Munk C."/>
            <person name="Kubota K."/>
            <person name="Zhou Y."/>
            <person name="Bruce D."/>
            <person name="Noronha J."/>
            <person name="Scheuermann R.H."/>
            <person name="Wang A."/>
            <person name="Wei X."/>
            <person name="Wang J."/>
            <person name="Hao J."/>
            <person name="Wagner D.M."/>
            <person name="Brettin T.S."/>
            <person name="Brown N."/>
            <person name="Gilna P."/>
            <person name="Keim P.S."/>
        </authorList>
    </citation>
    <scope>NUCLEOTIDE SEQUENCE [LARGE SCALE GENOMIC DNA]</scope>
    <source>
        <strain>WY96-3418</strain>
    </source>
</reference>
<gene>
    <name evidence="1" type="primary">ubiA</name>
    <name type="ordered locus">FTW_1328</name>
</gene>
<feature type="chain" id="PRO_1000069822" description="4-hydroxybenzoate octaprenyltransferase">
    <location>
        <begin position="1"/>
        <end position="289"/>
    </location>
</feature>
<feature type="transmembrane region" description="Helical" evidence="1">
    <location>
        <begin position="19"/>
        <end position="39"/>
    </location>
</feature>
<feature type="transmembrane region" description="Helical" evidence="1">
    <location>
        <begin position="42"/>
        <end position="62"/>
    </location>
</feature>
<feature type="transmembrane region" description="Helical" evidence="1">
    <location>
        <begin position="85"/>
        <end position="105"/>
    </location>
</feature>
<feature type="transmembrane region" description="Helical" evidence="1">
    <location>
        <begin position="107"/>
        <end position="127"/>
    </location>
</feature>
<feature type="transmembrane region" description="Helical" evidence="1">
    <location>
        <begin position="134"/>
        <end position="154"/>
    </location>
</feature>
<feature type="transmembrane region" description="Helical" evidence="1">
    <location>
        <begin position="165"/>
        <end position="185"/>
    </location>
</feature>
<feature type="transmembrane region" description="Helical" evidence="1">
    <location>
        <begin position="211"/>
        <end position="231"/>
    </location>
</feature>
<feature type="transmembrane region" description="Helical" evidence="1">
    <location>
        <begin position="233"/>
        <end position="253"/>
    </location>
</feature>
<feature type="transmembrane region" description="Helical" evidence="1">
    <location>
        <begin position="265"/>
        <end position="285"/>
    </location>
</feature>
<proteinExistence type="inferred from homology"/>
<dbReference type="EC" id="2.5.1.39" evidence="1"/>
<dbReference type="EMBL" id="CP000608">
    <property type="protein sequence ID" value="ABO47094.1"/>
    <property type="molecule type" value="Genomic_DNA"/>
</dbReference>
<dbReference type="RefSeq" id="WP_003026559.1">
    <property type="nucleotide sequence ID" value="NC_009257.1"/>
</dbReference>
<dbReference type="SMR" id="A4IYU3"/>
<dbReference type="KEGG" id="ftw:FTW_1328"/>
<dbReference type="HOGENOM" id="CLU_034879_1_0_6"/>
<dbReference type="UniPathway" id="UPA00232"/>
<dbReference type="GO" id="GO:0005886">
    <property type="term" value="C:plasma membrane"/>
    <property type="evidence" value="ECO:0007669"/>
    <property type="project" value="UniProtKB-SubCell"/>
</dbReference>
<dbReference type="GO" id="GO:0008412">
    <property type="term" value="F:4-hydroxybenzoate polyprenyltransferase activity"/>
    <property type="evidence" value="ECO:0007669"/>
    <property type="project" value="UniProtKB-UniRule"/>
</dbReference>
<dbReference type="GO" id="GO:0006744">
    <property type="term" value="P:ubiquinone biosynthetic process"/>
    <property type="evidence" value="ECO:0007669"/>
    <property type="project" value="UniProtKB-UniRule"/>
</dbReference>
<dbReference type="CDD" id="cd13959">
    <property type="entry name" value="PT_UbiA_COQ2"/>
    <property type="match status" value="1"/>
</dbReference>
<dbReference type="FunFam" id="1.10.357.140:FF:000008">
    <property type="entry name" value="4-hydroxybenzoate octaprenyltransferase"/>
    <property type="match status" value="1"/>
</dbReference>
<dbReference type="FunFam" id="1.20.120.1780:FF:000001">
    <property type="entry name" value="4-hydroxybenzoate octaprenyltransferase"/>
    <property type="match status" value="1"/>
</dbReference>
<dbReference type="Gene3D" id="1.10.357.140">
    <property type="entry name" value="UbiA prenyltransferase"/>
    <property type="match status" value="1"/>
</dbReference>
<dbReference type="Gene3D" id="1.20.120.1780">
    <property type="entry name" value="UbiA prenyltransferase"/>
    <property type="match status" value="1"/>
</dbReference>
<dbReference type="HAMAP" id="MF_01635">
    <property type="entry name" value="UbiA"/>
    <property type="match status" value="1"/>
</dbReference>
<dbReference type="InterPro" id="IPR006370">
    <property type="entry name" value="HB_polyprenyltransferase-like"/>
</dbReference>
<dbReference type="InterPro" id="IPR039653">
    <property type="entry name" value="Prenyltransferase"/>
</dbReference>
<dbReference type="InterPro" id="IPR000537">
    <property type="entry name" value="UbiA_prenyltransferase"/>
</dbReference>
<dbReference type="InterPro" id="IPR030470">
    <property type="entry name" value="UbiA_prenylTrfase_CS"/>
</dbReference>
<dbReference type="InterPro" id="IPR044878">
    <property type="entry name" value="UbiA_sf"/>
</dbReference>
<dbReference type="NCBIfam" id="TIGR01474">
    <property type="entry name" value="ubiA_proteo"/>
    <property type="match status" value="1"/>
</dbReference>
<dbReference type="PANTHER" id="PTHR11048:SF28">
    <property type="entry name" value="4-HYDROXYBENZOATE POLYPRENYLTRANSFERASE, MITOCHONDRIAL"/>
    <property type="match status" value="1"/>
</dbReference>
<dbReference type="PANTHER" id="PTHR11048">
    <property type="entry name" value="PRENYLTRANSFERASES"/>
    <property type="match status" value="1"/>
</dbReference>
<dbReference type="Pfam" id="PF01040">
    <property type="entry name" value="UbiA"/>
    <property type="match status" value="1"/>
</dbReference>
<dbReference type="PROSITE" id="PS00943">
    <property type="entry name" value="UBIA"/>
    <property type="match status" value="1"/>
</dbReference>
<comment type="function">
    <text evidence="1">Catalyzes the prenylation of para-hydroxybenzoate (PHB) with an all-trans polyprenyl group. Mediates the second step in the final reaction sequence of ubiquinone-8 (UQ-8) biosynthesis, which is the condensation of the polyisoprenoid side chain with PHB, generating the first membrane-bound Q intermediate 3-octaprenyl-4-hydroxybenzoate.</text>
</comment>
<comment type="catalytic activity">
    <reaction evidence="1">
        <text>all-trans-octaprenyl diphosphate + 4-hydroxybenzoate = 4-hydroxy-3-(all-trans-octaprenyl)benzoate + diphosphate</text>
        <dbReference type="Rhea" id="RHEA:27782"/>
        <dbReference type="ChEBI" id="CHEBI:1617"/>
        <dbReference type="ChEBI" id="CHEBI:17879"/>
        <dbReference type="ChEBI" id="CHEBI:33019"/>
        <dbReference type="ChEBI" id="CHEBI:57711"/>
        <dbReference type="EC" id="2.5.1.39"/>
    </reaction>
</comment>
<comment type="cofactor">
    <cofactor evidence="1">
        <name>Mg(2+)</name>
        <dbReference type="ChEBI" id="CHEBI:18420"/>
    </cofactor>
</comment>
<comment type="pathway">
    <text evidence="1">Cofactor biosynthesis; ubiquinone biosynthesis.</text>
</comment>
<comment type="subcellular location">
    <subcellularLocation>
        <location evidence="1">Cell inner membrane</location>
        <topology evidence="1">Multi-pass membrane protein</topology>
    </subcellularLocation>
</comment>
<comment type="similarity">
    <text evidence="1">Belongs to the UbiA prenyltransferase family.</text>
</comment>
<name>UBIA_FRATW</name>
<sequence length="289" mass="33090">MNKQQLKAYFMLMRLHRPIPILLILWPTLTALVLASHGLPDISYLVIFTIGVVVMRTVGCIINDIADVDFDKHVARTNTRPLTSGQLSIKNAIWLCISLTLVAFICVLFLNLYTILLSFVALFLAILYPFCKRFFAIPQLILGLAFNFGIFMAFSAIQNQIPVEAWIFYIATICWTIAYDTIYALADREFDLEIGIKSSAVLFGNKVFRYILLFNFLSLLLLIILGIYCDFNSFFYLGVVICSLFFVRNYFLYKKLGITNCINAFSANHWIGLIIFIIAVIQYIIKEFL</sequence>
<protein>
    <recommendedName>
        <fullName evidence="1">4-hydroxybenzoate octaprenyltransferase</fullName>
        <ecNumber evidence="1">2.5.1.39</ecNumber>
    </recommendedName>
    <alternativeName>
        <fullName evidence="1">4-HB polyprenyltransferase</fullName>
    </alternativeName>
</protein>